<gene>
    <name type="primary">aldoc</name>
</gene>
<proteinExistence type="evidence at transcript level"/>
<name>ALDOC_CARAU</name>
<protein>
    <recommendedName>
        <fullName>Fructose-bisphosphate aldolase C</fullName>
        <ecNumber>4.1.2.13</ecNumber>
    </recommendedName>
    <alternativeName>
        <fullName>Brain-type aldolase</fullName>
    </alternativeName>
</protein>
<dbReference type="EC" id="4.1.2.13"/>
<dbReference type="EMBL" id="U36777">
    <property type="protein sequence ID" value="AAA84887.1"/>
    <property type="molecule type" value="mRNA"/>
</dbReference>
<dbReference type="SMR" id="P53448"/>
<dbReference type="UniPathway" id="UPA00109">
    <property type="reaction ID" value="UER00183"/>
</dbReference>
<dbReference type="Proteomes" id="UP000515129">
    <property type="component" value="Unplaced"/>
</dbReference>
<dbReference type="GO" id="GO:0004332">
    <property type="term" value="F:fructose-bisphosphate aldolase activity"/>
    <property type="evidence" value="ECO:0000250"/>
    <property type="project" value="UniProtKB"/>
</dbReference>
<dbReference type="GO" id="GO:0030388">
    <property type="term" value="P:fructose 1,6-bisphosphate metabolic process"/>
    <property type="evidence" value="ECO:0000250"/>
    <property type="project" value="UniProtKB"/>
</dbReference>
<dbReference type="GO" id="GO:0006096">
    <property type="term" value="P:glycolytic process"/>
    <property type="evidence" value="ECO:0007669"/>
    <property type="project" value="UniProtKB-UniPathway"/>
</dbReference>
<dbReference type="CDD" id="cd00948">
    <property type="entry name" value="FBP_aldolase_I_a"/>
    <property type="match status" value="1"/>
</dbReference>
<dbReference type="FunFam" id="3.20.20.70:FF:000021">
    <property type="entry name" value="Fructose-bisphosphate aldolase"/>
    <property type="match status" value="1"/>
</dbReference>
<dbReference type="Gene3D" id="3.20.20.70">
    <property type="entry name" value="Aldolase class I"/>
    <property type="match status" value="1"/>
</dbReference>
<dbReference type="InterPro" id="IPR029768">
    <property type="entry name" value="Aldolase_I_AS"/>
</dbReference>
<dbReference type="InterPro" id="IPR013785">
    <property type="entry name" value="Aldolase_TIM"/>
</dbReference>
<dbReference type="InterPro" id="IPR000741">
    <property type="entry name" value="FBA_I"/>
</dbReference>
<dbReference type="NCBIfam" id="NF033379">
    <property type="entry name" value="FrucBisAld_I"/>
    <property type="match status" value="1"/>
</dbReference>
<dbReference type="PANTHER" id="PTHR11627">
    <property type="entry name" value="FRUCTOSE-BISPHOSPHATE ALDOLASE"/>
    <property type="match status" value="1"/>
</dbReference>
<dbReference type="Pfam" id="PF00274">
    <property type="entry name" value="Glycolytic"/>
    <property type="match status" value="1"/>
</dbReference>
<dbReference type="SUPFAM" id="SSF51569">
    <property type="entry name" value="Aldolase"/>
    <property type="match status" value="1"/>
</dbReference>
<dbReference type="PROSITE" id="PS00158">
    <property type="entry name" value="ALDOLASE_CLASS_I"/>
    <property type="match status" value="1"/>
</dbReference>
<accession>P53448</accession>
<organism>
    <name type="scientific">Carassius auratus</name>
    <name type="common">Goldfish</name>
    <dbReference type="NCBI Taxonomy" id="7957"/>
    <lineage>
        <taxon>Eukaryota</taxon>
        <taxon>Metazoa</taxon>
        <taxon>Chordata</taxon>
        <taxon>Craniata</taxon>
        <taxon>Vertebrata</taxon>
        <taxon>Euteleostomi</taxon>
        <taxon>Actinopterygii</taxon>
        <taxon>Neopterygii</taxon>
        <taxon>Teleostei</taxon>
        <taxon>Ostariophysi</taxon>
        <taxon>Cypriniformes</taxon>
        <taxon>Cyprinidae</taxon>
        <taxon>Cyprininae</taxon>
        <taxon>Carassius</taxon>
    </lineage>
</organism>
<keyword id="KW-0324">Glycolysis</keyword>
<keyword id="KW-0456">Lyase</keyword>
<keyword id="KW-1185">Reference proteome</keyword>
<keyword id="KW-0704">Schiff base</keyword>
<evidence type="ECO:0000250" key="1"/>
<evidence type="ECO:0000269" key="2">
    <source>
    </source>
</evidence>
<evidence type="ECO:0000305" key="3"/>
<feature type="initiator methionine" description="Removed" evidence="1">
    <location>
        <position position="1"/>
    </location>
</feature>
<feature type="chain" id="PRO_0000216953" description="Fructose-bisphosphate aldolase C">
    <location>
        <begin position="2"/>
        <end position="363"/>
    </location>
</feature>
<feature type="active site" description="Schiff-base intermediate with dihydroxyacetone-P" evidence="1">
    <location>
        <position position="230"/>
    </location>
</feature>
<feature type="binding site" evidence="1">
    <location>
        <position position="56"/>
    </location>
    <ligand>
        <name>substrate</name>
    </ligand>
</feature>
<feature type="binding site" evidence="1">
    <location>
        <position position="147"/>
    </location>
    <ligand>
        <name>substrate</name>
    </ligand>
</feature>
<feature type="site" description="Necessary for preference for fructose 1,6-bisphosphate over fructose 1-phosphate" evidence="1">
    <location>
        <position position="363"/>
    </location>
</feature>
<comment type="catalytic activity">
    <reaction>
        <text>beta-D-fructose 1,6-bisphosphate = D-glyceraldehyde 3-phosphate + dihydroxyacetone phosphate</text>
        <dbReference type="Rhea" id="RHEA:14729"/>
        <dbReference type="ChEBI" id="CHEBI:32966"/>
        <dbReference type="ChEBI" id="CHEBI:57642"/>
        <dbReference type="ChEBI" id="CHEBI:59776"/>
        <dbReference type="EC" id="4.1.2.13"/>
    </reaction>
</comment>
<comment type="pathway">
    <text>Carbohydrate degradation; glycolysis; D-glyceraldehyde 3-phosphate and glycerone phosphate from D-glucose: step 4/4.</text>
</comment>
<comment type="subunit">
    <text evidence="1">Homotetramer.</text>
</comment>
<comment type="tissue specificity">
    <text evidence="2">Expressed in brain but not in liver or muscle.</text>
</comment>
<comment type="similarity">
    <text evidence="3">Belongs to the class I fructose-bisphosphate aldolase family.</text>
</comment>
<sequence>MTHQYPALTTEQKRELQDIAQRIVAPGKGILAADESTGSMAKRLNPIGVENTEENRRLYRQLLFTADERMDKCIGGVIFFHETLYQKADDGTPFAKMIKDRGIVVGIKVDKGVVPLAGTNGETTTQGLDGLSERCAQYKKDGADFAKWRSVLKISETSPSELAIMENANVLARYASICQQNGIVPIVEPEILPDGDHDLKRCQYVTEKVLAACYKALSDHHVYLEGTLLKPNMVTAGHSCPTKFSNQEIAMATVTALRRTVPPAVTGVTFLSGGQSEEEASINLNAINNCPLTKPWALTFSYGRALQASALSAWRGVKENEKAATEEFLKRAEANGLAAQGKYVSSGMDGSAGQSLYVANHAY</sequence>
<reference key="1">
    <citation type="journal article" date="1997" name="Comp. Biochem. Physiol.">
        <title>Identification of neuronal isozyme specific residues by comparison of goldfish aldolase C to other aldolases.</title>
        <authorList>
            <person name="Berardini T.Z."/>
            <person name="Drygas-Williams M."/>
            <person name="Callard G.V."/>
            <person name="Tolan D.R."/>
        </authorList>
    </citation>
    <scope>NUCLEOTIDE SEQUENCE [MRNA]</scope>
    <scope>TISSUE SPECIFICITY</scope>
    <source>
        <tissue>Brain</tissue>
    </source>
</reference>